<organism>
    <name type="scientific">Dictyostelium discoideum</name>
    <name type="common">Social amoeba</name>
    <dbReference type="NCBI Taxonomy" id="44689"/>
    <lineage>
        <taxon>Eukaryota</taxon>
        <taxon>Amoebozoa</taxon>
        <taxon>Evosea</taxon>
        <taxon>Eumycetozoa</taxon>
        <taxon>Dictyostelia</taxon>
        <taxon>Dictyosteliales</taxon>
        <taxon>Dictyosteliaceae</taxon>
        <taxon>Dictyostelium</taxon>
    </lineage>
</organism>
<feature type="chain" id="PRO_0000328153" description="Allantoicase">
    <location>
        <begin position="1"/>
        <end position="369"/>
    </location>
</feature>
<feature type="region of interest" description="Disordered" evidence="2">
    <location>
        <begin position="341"/>
        <end position="369"/>
    </location>
</feature>
<feature type="compositionally biased region" description="Low complexity" evidence="2">
    <location>
        <begin position="345"/>
        <end position="357"/>
    </location>
</feature>
<feature type="sequence conflict" description="In Ref. 2; AAX18646." evidence="3" ref="2">
    <original>K</original>
    <variation>N</variation>
    <location>
        <position position="83"/>
    </location>
</feature>
<reference key="1">
    <citation type="journal article" date="2005" name="Nature">
        <title>The genome of the social amoeba Dictyostelium discoideum.</title>
        <authorList>
            <person name="Eichinger L."/>
            <person name="Pachebat J.A."/>
            <person name="Gloeckner G."/>
            <person name="Rajandream M.A."/>
            <person name="Sucgang R."/>
            <person name="Berriman M."/>
            <person name="Song J."/>
            <person name="Olsen R."/>
            <person name="Szafranski K."/>
            <person name="Xu Q."/>
            <person name="Tunggal B."/>
            <person name="Kummerfeld S."/>
            <person name="Madera M."/>
            <person name="Konfortov B.A."/>
            <person name="Rivero F."/>
            <person name="Bankier A.T."/>
            <person name="Lehmann R."/>
            <person name="Hamlin N."/>
            <person name="Davies R."/>
            <person name="Gaudet P."/>
            <person name="Fey P."/>
            <person name="Pilcher K."/>
            <person name="Chen G."/>
            <person name="Saunders D."/>
            <person name="Sodergren E.J."/>
            <person name="Davis P."/>
            <person name="Kerhornou A."/>
            <person name="Nie X."/>
            <person name="Hall N."/>
            <person name="Anjard C."/>
            <person name="Hemphill L."/>
            <person name="Bason N."/>
            <person name="Farbrother P."/>
            <person name="Desany B."/>
            <person name="Just E."/>
            <person name="Morio T."/>
            <person name="Rost R."/>
            <person name="Churcher C.M."/>
            <person name="Cooper J."/>
            <person name="Haydock S."/>
            <person name="van Driessche N."/>
            <person name="Cronin A."/>
            <person name="Goodhead I."/>
            <person name="Muzny D.M."/>
            <person name="Mourier T."/>
            <person name="Pain A."/>
            <person name="Lu M."/>
            <person name="Harper D."/>
            <person name="Lindsay R."/>
            <person name="Hauser H."/>
            <person name="James K.D."/>
            <person name="Quiles M."/>
            <person name="Madan Babu M."/>
            <person name="Saito T."/>
            <person name="Buchrieser C."/>
            <person name="Wardroper A."/>
            <person name="Felder M."/>
            <person name="Thangavelu M."/>
            <person name="Johnson D."/>
            <person name="Knights A."/>
            <person name="Loulseged H."/>
            <person name="Mungall K.L."/>
            <person name="Oliver K."/>
            <person name="Price C."/>
            <person name="Quail M.A."/>
            <person name="Urushihara H."/>
            <person name="Hernandez J."/>
            <person name="Rabbinowitsch E."/>
            <person name="Steffen D."/>
            <person name="Sanders M."/>
            <person name="Ma J."/>
            <person name="Kohara Y."/>
            <person name="Sharp S."/>
            <person name="Simmonds M.N."/>
            <person name="Spiegler S."/>
            <person name="Tivey A."/>
            <person name="Sugano S."/>
            <person name="White B."/>
            <person name="Walker D."/>
            <person name="Woodward J.R."/>
            <person name="Winckler T."/>
            <person name="Tanaka Y."/>
            <person name="Shaulsky G."/>
            <person name="Schleicher M."/>
            <person name="Weinstock G.M."/>
            <person name="Rosenthal A."/>
            <person name="Cox E.C."/>
            <person name="Chisholm R.L."/>
            <person name="Gibbs R.A."/>
            <person name="Loomis W.F."/>
            <person name="Platzer M."/>
            <person name="Kay R.R."/>
            <person name="Williams J.G."/>
            <person name="Dear P.H."/>
            <person name="Noegel A.A."/>
            <person name="Barrell B.G."/>
            <person name="Kuspa A."/>
        </authorList>
    </citation>
    <scope>NUCLEOTIDE SEQUENCE [LARGE SCALE GENOMIC DNA]</scope>
    <source>
        <strain>AX4</strain>
    </source>
</reference>
<reference key="2">
    <citation type="submission" date="2005-01" db="EMBL/GenBank/DDBJ databases">
        <authorList>
            <person name="Hou L.S."/>
            <person name="Ma N.S."/>
        </authorList>
    </citation>
    <scope>NUCLEOTIDE SEQUENCE [MRNA] OF 61-238</scope>
</reference>
<reference key="3">
    <citation type="submission" date="2009-07" db="UniProtKB">
        <authorList>
            <person name="Bienvenut W.V."/>
            <person name="Ura S."/>
            <person name="Insall R.H."/>
        </authorList>
    </citation>
    <scope>PROTEIN SEQUENCE OF 126-136; 235-244; 253-262 AND 305-333</scope>
    <scope>IDENTIFICATION BY MASS SPECTROMETRY</scope>
    <source>
        <strain>AX2</strain>
    </source>
</reference>
<sequence>MVYANNNIDPNAPCYVSECAELLSDKVGGVVLGCTDQWFAECVNLIKHSAPVWDAEKYVDTGKWMDGWETKRHNPDHDWCIIKLGIPGVIYGFEIDTAYFTGNYPPHASIEALCDDSDPNFNTLKESNNWEVILNKSDLGSSCKKYFECKVEKRFTHIKFRIYPDGGVARLRAYGRVVKDWTLVIPGELVDLAAIENGGLVTQVSDHFYGNKNNIIMPGRSVNMGDGWETKRRRGPGNDWLTVKLAKEGIVKRIEVDTNWFKGNFPTSCSIDAIHSSSAPDETHLQDYEWTNILPNSPLCGHRRHFFQNELVNNDKPFTHIRLNIFPDGGVSRLRINCSLPDSKNNNNNNNNNNNNNTSNSFKTSDRQQ</sequence>
<dbReference type="EC" id="3.5.3.4"/>
<dbReference type="EMBL" id="AAFI02000035">
    <property type="protein sequence ID" value="EAL67360.1"/>
    <property type="molecule type" value="Genomic_DNA"/>
</dbReference>
<dbReference type="EMBL" id="AY894718">
    <property type="protein sequence ID" value="AAX18646.1"/>
    <property type="status" value="ALT_FRAME"/>
    <property type="molecule type" value="mRNA"/>
</dbReference>
<dbReference type="RefSeq" id="XP_641340.1">
    <property type="nucleotide sequence ID" value="XM_636248.1"/>
</dbReference>
<dbReference type="SMR" id="Q54VL5"/>
<dbReference type="STRING" id="44689.Q54VL5"/>
<dbReference type="PaxDb" id="44689-DDB0231471"/>
<dbReference type="EnsemblProtists" id="EAL67360">
    <property type="protein sequence ID" value="EAL67360"/>
    <property type="gene ID" value="DDB_G0280267"/>
</dbReference>
<dbReference type="GeneID" id="8622474"/>
<dbReference type="KEGG" id="ddi:DDB_G0280267"/>
<dbReference type="dictyBase" id="DDB_G0280267">
    <property type="gene designation" value="allC"/>
</dbReference>
<dbReference type="VEuPathDB" id="AmoebaDB:DDB_G0280267"/>
<dbReference type="eggNOG" id="KOG4145">
    <property type="taxonomic scope" value="Eukaryota"/>
</dbReference>
<dbReference type="HOGENOM" id="CLU_038797_1_2_1"/>
<dbReference type="InParanoid" id="Q54VL5"/>
<dbReference type="OMA" id="MDDGWET"/>
<dbReference type="PhylomeDB" id="Q54VL5"/>
<dbReference type="BRENDA" id="3.5.3.4">
    <property type="organism ID" value="1939"/>
</dbReference>
<dbReference type="UniPathway" id="UPA00395">
    <property type="reaction ID" value="UER00654"/>
</dbReference>
<dbReference type="PRO" id="PR:Q54VL5"/>
<dbReference type="Proteomes" id="UP000002195">
    <property type="component" value="Chromosome 3"/>
</dbReference>
<dbReference type="GO" id="GO:0004037">
    <property type="term" value="F:allantoicase activity"/>
    <property type="evidence" value="ECO:0007669"/>
    <property type="project" value="UniProtKB-EC"/>
</dbReference>
<dbReference type="GO" id="GO:0031152">
    <property type="term" value="P:aggregation involved in sorocarp development"/>
    <property type="evidence" value="ECO:0000315"/>
    <property type="project" value="dictyBase"/>
</dbReference>
<dbReference type="GO" id="GO:0000256">
    <property type="term" value="P:allantoin catabolic process"/>
    <property type="evidence" value="ECO:0007669"/>
    <property type="project" value="UniProtKB-UniPathway"/>
</dbReference>
<dbReference type="GO" id="GO:0019954">
    <property type="term" value="P:asexual reproduction"/>
    <property type="evidence" value="ECO:0000315"/>
    <property type="project" value="dictyBase"/>
</dbReference>
<dbReference type="GO" id="GO:0010467">
    <property type="term" value="P:gene expression"/>
    <property type="evidence" value="ECO:0000315"/>
    <property type="project" value="dictyBase"/>
</dbReference>
<dbReference type="GO" id="GO:0006144">
    <property type="term" value="P:purine nucleobase metabolic process"/>
    <property type="evidence" value="ECO:0007669"/>
    <property type="project" value="UniProtKB-KW"/>
</dbReference>
<dbReference type="FunFam" id="2.60.120.260:FF:000078">
    <property type="entry name" value="DAL2p Allantoicase"/>
    <property type="match status" value="1"/>
</dbReference>
<dbReference type="FunFam" id="2.60.120.260:FF:000059">
    <property type="entry name" value="Probable allantoicase"/>
    <property type="match status" value="1"/>
</dbReference>
<dbReference type="Gene3D" id="2.60.120.260">
    <property type="entry name" value="Galactose-binding domain-like"/>
    <property type="match status" value="2"/>
</dbReference>
<dbReference type="HAMAP" id="MF_00813">
    <property type="entry name" value="Allantoicase"/>
    <property type="match status" value="1"/>
</dbReference>
<dbReference type="InterPro" id="IPR005164">
    <property type="entry name" value="Allantoicase"/>
</dbReference>
<dbReference type="InterPro" id="IPR015908">
    <property type="entry name" value="Allantoicase_dom"/>
</dbReference>
<dbReference type="InterPro" id="IPR008979">
    <property type="entry name" value="Galactose-bd-like_sf"/>
</dbReference>
<dbReference type="NCBIfam" id="TIGR02961">
    <property type="entry name" value="allantoicase"/>
    <property type="match status" value="1"/>
</dbReference>
<dbReference type="PANTHER" id="PTHR12045">
    <property type="entry name" value="ALLANTOICASE"/>
    <property type="match status" value="1"/>
</dbReference>
<dbReference type="PANTHER" id="PTHR12045:SF3">
    <property type="entry name" value="INACTIVE ALLANTOICASE-RELATED"/>
    <property type="match status" value="1"/>
</dbReference>
<dbReference type="Pfam" id="PF03561">
    <property type="entry name" value="Allantoicase"/>
    <property type="match status" value="2"/>
</dbReference>
<dbReference type="PIRSF" id="PIRSF016516">
    <property type="entry name" value="Allantoicase"/>
    <property type="match status" value="1"/>
</dbReference>
<dbReference type="SUPFAM" id="SSF49785">
    <property type="entry name" value="Galactose-binding domain-like"/>
    <property type="match status" value="2"/>
</dbReference>
<gene>
    <name type="primary">allC</name>
    <name type="ORF">DDB_G0280267</name>
</gene>
<name>ALLC_DICDI</name>
<keyword id="KW-0903">Direct protein sequencing</keyword>
<keyword id="KW-0378">Hydrolase</keyword>
<keyword id="KW-0659">Purine metabolism</keyword>
<keyword id="KW-1185">Reference proteome</keyword>
<comment type="function">
    <text evidence="1">Utilization of purines as secondary nitrogen sources, when primary sources are limiting.</text>
</comment>
<comment type="catalytic activity">
    <reaction>
        <text>allantoate + H2O = (S)-ureidoglycolate + urea</text>
        <dbReference type="Rhea" id="RHEA:11016"/>
        <dbReference type="ChEBI" id="CHEBI:15377"/>
        <dbReference type="ChEBI" id="CHEBI:16199"/>
        <dbReference type="ChEBI" id="CHEBI:17536"/>
        <dbReference type="ChEBI" id="CHEBI:57296"/>
        <dbReference type="EC" id="3.5.3.4"/>
    </reaction>
</comment>
<comment type="pathway">
    <text>Nitrogen metabolism; (S)-allantoin degradation; (S)-ureidoglycolate from allantoate (aminidohydrolase route): step 1/1.</text>
</comment>
<comment type="similarity">
    <text evidence="3">Belongs to the allantoicase family.</text>
</comment>
<comment type="sequence caution" evidence="3">
    <conflict type="frameshift">
        <sequence resource="EMBL-CDS" id="AAX18646"/>
    </conflict>
</comment>
<proteinExistence type="evidence at protein level"/>
<accession>Q54VL5</accession>
<accession>Q5D6A3</accession>
<evidence type="ECO:0000250" key="1"/>
<evidence type="ECO:0000256" key="2">
    <source>
        <dbReference type="SAM" id="MobiDB-lite"/>
    </source>
</evidence>
<evidence type="ECO:0000305" key="3"/>
<protein>
    <recommendedName>
        <fullName>Allantoicase</fullName>
        <ecNumber>3.5.3.4</ecNumber>
    </recommendedName>
    <alternativeName>
        <fullName>Allantoate amidinohydrolase</fullName>
    </alternativeName>
</protein>